<dbReference type="EMBL" id="AE009949">
    <property type="protein sequence ID" value="AAL97224.1"/>
    <property type="molecule type" value="Genomic_DNA"/>
</dbReference>
<dbReference type="RefSeq" id="WP_011017452.1">
    <property type="nucleotide sequence ID" value="NC_003485.1"/>
</dbReference>
<dbReference type="SMR" id="Q8P274"/>
<dbReference type="KEGG" id="spm:spyM18_0506"/>
<dbReference type="HOGENOM" id="CLU_073981_2_0_9"/>
<dbReference type="GO" id="GO:0005737">
    <property type="term" value="C:cytoplasm"/>
    <property type="evidence" value="ECO:0007669"/>
    <property type="project" value="UniProtKB-SubCell"/>
</dbReference>
<dbReference type="GO" id="GO:0043023">
    <property type="term" value="F:ribosomal large subunit binding"/>
    <property type="evidence" value="ECO:0007669"/>
    <property type="project" value="TreeGrafter"/>
</dbReference>
<dbReference type="GO" id="GO:0006415">
    <property type="term" value="P:translational termination"/>
    <property type="evidence" value="ECO:0007669"/>
    <property type="project" value="UniProtKB-UniRule"/>
</dbReference>
<dbReference type="CDD" id="cd00520">
    <property type="entry name" value="RRF"/>
    <property type="match status" value="1"/>
</dbReference>
<dbReference type="FunFam" id="1.10.132.20:FF:000001">
    <property type="entry name" value="Ribosome-recycling factor"/>
    <property type="match status" value="1"/>
</dbReference>
<dbReference type="FunFam" id="3.30.1360.40:FF:000001">
    <property type="entry name" value="Ribosome-recycling factor"/>
    <property type="match status" value="1"/>
</dbReference>
<dbReference type="Gene3D" id="3.30.1360.40">
    <property type="match status" value="1"/>
</dbReference>
<dbReference type="Gene3D" id="1.10.132.20">
    <property type="entry name" value="Ribosome-recycling factor"/>
    <property type="match status" value="1"/>
</dbReference>
<dbReference type="HAMAP" id="MF_00040">
    <property type="entry name" value="RRF"/>
    <property type="match status" value="1"/>
</dbReference>
<dbReference type="InterPro" id="IPR002661">
    <property type="entry name" value="Ribosome_recyc_fac"/>
</dbReference>
<dbReference type="InterPro" id="IPR023584">
    <property type="entry name" value="Ribosome_recyc_fac_dom"/>
</dbReference>
<dbReference type="InterPro" id="IPR036191">
    <property type="entry name" value="RRF_sf"/>
</dbReference>
<dbReference type="NCBIfam" id="TIGR00496">
    <property type="entry name" value="frr"/>
    <property type="match status" value="1"/>
</dbReference>
<dbReference type="PANTHER" id="PTHR20982:SF3">
    <property type="entry name" value="MITOCHONDRIAL RIBOSOME RECYCLING FACTOR PSEUDO 1"/>
    <property type="match status" value="1"/>
</dbReference>
<dbReference type="PANTHER" id="PTHR20982">
    <property type="entry name" value="RIBOSOME RECYCLING FACTOR"/>
    <property type="match status" value="1"/>
</dbReference>
<dbReference type="Pfam" id="PF01765">
    <property type="entry name" value="RRF"/>
    <property type="match status" value="1"/>
</dbReference>
<dbReference type="SUPFAM" id="SSF55194">
    <property type="entry name" value="Ribosome recycling factor, RRF"/>
    <property type="match status" value="1"/>
</dbReference>
<organism>
    <name type="scientific">Streptococcus pyogenes serotype M18 (strain MGAS8232)</name>
    <dbReference type="NCBI Taxonomy" id="186103"/>
    <lineage>
        <taxon>Bacteria</taxon>
        <taxon>Bacillati</taxon>
        <taxon>Bacillota</taxon>
        <taxon>Bacilli</taxon>
        <taxon>Lactobacillales</taxon>
        <taxon>Streptococcaceae</taxon>
        <taxon>Streptococcus</taxon>
    </lineage>
</organism>
<evidence type="ECO:0000255" key="1">
    <source>
        <dbReference type="HAMAP-Rule" id="MF_00040"/>
    </source>
</evidence>
<protein>
    <recommendedName>
        <fullName evidence="1">Ribosome-recycling factor</fullName>
        <shortName evidence="1">RRF</shortName>
    </recommendedName>
    <alternativeName>
        <fullName evidence="1">Ribosome-releasing factor</fullName>
    </alternativeName>
</protein>
<comment type="function">
    <text evidence="1">Responsible for the release of ribosomes from messenger RNA at the termination of protein biosynthesis. May increase the efficiency of translation by recycling ribosomes from one round of translation to another.</text>
</comment>
<comment type="subcellular location">
    <subcellularLocation>
        <location evidence="1">Cytoplasm</location>
    </subcellularLocation>
</comment>
<comment type="similarity">
    <text evidence="1">Belongs to the RRF family.</text>
</comment>
<gene>
    <name evidence="1" type="primary">frr</name>
    <name type="synonym">rrf</name>
    <name type="ordered locus">spyM18_0506</name>
</gene>
<proteinExistence type="inferred from homology"/>
<sequence length="185" mass="20530">MANAIIETAKERFAQSHQSLSREYASIRAGRANASLLDRIQVDYYGAPTPLNQLASITVPEARVLLISPFDKSSIKDIERALNASDLGITPANDGSVIRLVIPALTEETRKELAKEVKKVGENAKIAIRNIRRDAMDDAKKQEKAKEITEDELKTLEKDIQKATDDAIKEIDRMTAEKEKELLSG</sequence>
<feature type="chain" id="PRO_0000167557" description="Ribosome-recycling factor">
    <location>
        <begin position="1"/>
        <end position="185"/>
    </location>
</feature>
<accession>Q8P274</accession>
<keyword id="KW-0963">Cytoplasm</keyword>
<keyword id="KW-0648">Protein biosynthesis</keyword>
<name>RRF_STRP8</name>
<reference key="1">
    <citation type="journal article" date="2002" name="Proc. Natl. Acad. Sci. U.S.A.">
        <title>Genome sequence and comparative microarray analysis of serotype M18 group A Streptococcus strains associated with acute rheumatic fever outbreaks.</title>
        <authorList>
            <person name="Smoot J.C."/>
            <person name="Barbian K.D."/>
            <person name="Van Gompel J.J."/>
            <person name="Smoot L.M."/>
            <person name="Chaussee M.S."/>
            <person name="Sylva G.L."/>
            <person name="Sturdevant D.E."/>
            <person name="Ricklefs S.M."/>
            <person name="Porcella S.F."/>
            <person name="Parkins L.D."/>
            <person name="Beres S.B."/>
            <person name="Campbell D.S."/>
            <person name="Smith T.M."/>
            <person name="Zhang Q."/>
            <person name="Kapur V."/>
            <person name="Daly J.A."/>
            <person name="Veasy L.G."/>
            <person name="Musser J.M."/>
        </authorList>
    </citation>
    <scope>NUCLEOTIDE SEQUENCE [LARGE SCALE GENOMIC DNA]</scope>
    <source>
        <strain>MGAS8232</strain>
    </source>
</reference>